<organism>
    <name type="scientific">Bacillus thuringiensis subsp. konkukian (strain 97-27)</name>
    <dbReference type="NCBI Taxonomy" id="281309"/>
    <lineage>
        <taxon>Bacteria</taxon>
        <taxon>Bacillati</taxon>
        <taxon>Bacillota</taxon>
        <taxon>Bacilli</taxon>
        <taxon>Bacillales</taxon>
        <taxon>Bacillaceae</taxon>
        <taxon>Bacillus</taxon>
        <taxon>Bacillus cereus group</taxon>
    </lineage>
</organism>
<comment type="function">
    <text evidence="1">Catalyzes the condensation of iminoaspartate with dihydroxyacetone phosphate to form quinolinate.</text>
</comment>
<comment type="catalytic activity">
    <reaction evidence="1">
        <text>iminosuccinate + dihydroxyacetone phosphate = quinolinate + phosphate + 2 H2O + H(+)</text>
        <dbReference type="Rhea" id="RHEA:25888"/>
        <dbReference type="ChEBI" id="CHEBI:15377"/>
        <dbReference type="ChEBI" id="CHEBI:15378"/>
        <dbReference type="ChEBI" id="CHEBI:29959"/>
        <dbReference type="ChEBI" id="CHEBI:43474"/>
        <dbReference type="ChEBI" id="CHEBI:57642"/>
        <dbReference type="ChEBI" id="CHEBI:77875"/>
        <dbReference type="EC" id="2.5.1.72"/>
    </reaction>
    <physiologicalReaction direction="left-to-right" evidence="1">
        <dbReference type="Rhea" id="RHEA:25889"/>
    </physiologicalReaction>
</comment>
<comment type="cofactor">
    <cofactor evidence="1">
        <name>[4Fe-4S] cluster</name>
        <dbReference type="ChEBI" id="CHEBI:49883"/>
    </cofactor>
    <text evidence="1">Binds 1 [4Fe-4S] cluster per subunit.</text>
</comment>
<comment type="pathway">
    <text evidence="1">Cofactor biosynthesis; NAD(+) biosynthesis; quinolinate from iminoaspartate: step 1/1.</text>
</comment>
<comment type="subcellular location">
    <subcellularLocation>
        <location evidence="1">Cytoplasm</location>
    </subcellularLocation>
</comment>
<comment type="similarity">
    <text evidence="1">Belongs to the quinolinate synthase family. Type 3 subfamily.</text>
</comment>
<feature type="chain" id="PRO_1000024988" description="Quinolinate synthase">
    <location>
        <begin position="1"/>
        <end position="368"/>
    </location>
</feature>
<feature type="binding site" evidence="1">
    <location>
        <position position="46"/>
    </location>
    <ligand>
        <name>iminosuccinate</name>
        <dbReference type="ChEBI" id="CHEBI:77875"/>
    </ligand>
</feature>
<feature type="binding site" evidence="1">
    <location>
        <position position="63"/>
    </location>
    <ligand>
        <name>iminosuccinate</name>
        <dbReference type="ChEBI" id="CHEBI:77875"/>
    </ligand>
</feature>
<feature type="binding site" evidence="1">
    <location>
        <position position="110"/>
    </location>
    <ligand>
        <name>[4Fe-4S] cluster</name>
        <dbReference type="ChEBI" id="CHEBI:49883"/>
    </ligand>
</feature>
<feature type="binding site" evidence="1">
    <location>
        <begin position="141"/>
        <end position="143"/>
    </location>
    <ligand>
        <name>iminosuccinate</name>
        <dbReference type="ChEBI" id="CHEBI:77875"/>
    </ligand>
</feature>
<feature type="binding site" evidence="1">
    <location>
        <position position="162"/>
    </location>
    <ligand>
        <name>iminosuccinate</name>
        <dbReference type="ChEBI" id="CHEBI:77875"/>
    </ligand>
</feature>
<feature type="binding site" evidence="1">
    <location>
        <position position="230"/>
    </location>
    <ligand>
        <name>[4Fe-4S] cluster</name>
        <dbReference type="ChEBI" id="CHEBI:49883"/>
    </ligand>
</feature>
<feature type="binding site" evidence="1">
    <location>
        <begin position="256"/>
        <end position="258"/>
    </location>
    <ligand>
        <name>iminosuccinate</name>
        <dbReference type="ChEBI" id="CHEBI:77875"/>
    </ligand>
</feature>
<feature type="binding site" evidence="1">
    <location>
        <position position="273"/>
    </location>
    <ligand>
        <name>iminosuccinate</name>
        <dbReference type="ChEBI" id="CHEBI:77875"/>
    </ligand>
</feature>
<feature type="binding site" evidence="1">
    <location>
        <position position="320"/>
    </location>
    <ligand>
        <name>[4Fe-4S] cluster</name>
        <dbReference type="ChEBI" id="CHEBI:49883"/>
    </ligand>
</feature>
<reference key="1">
    <citation type="journal article" date="2006" name="J. Bacteriol.">
        <title>Pathogenomic sequence analysis of Bacillus cereus and Bacillus thuringiensis isolates closely related to Bacillus anthracis.</title>
        <authorList>
            <person name="Han C.S."/>
            <person name="Xie G."/>
            <person name="Challacombe J.F."/>
            <person name="Altherr M.R."/>
            <person name="Bhotika S.S."/>
            <person name="Bruce D."/>
            <person name="Campbell C.S."/>
            <person name="Campbell M.L."/>
            <person name="Chen J."/>
            <person name="Chertkov O."/>
            <person name="Cleland C."/>
            <person name="Dimitrijevic M."/>
            <person name="Doggett N.A."/>
            <person name="Fawcett J.J."/>
            <person name="Glavina T."/>
            <person name="Goodwin L.A."/>
            <person name="Hill K.K."/>
            <person name="Hitchcock P."/>
            <person name="Jackson P.J."/>
            <person name="Keim P."/>
            <person name="Kewalramani A.R."/>
            <person name="Longmire J."/>
            <person name="Lucas S."/>
            <person name="Malfatti S."/>
            <person name="McMurry K."/>
            <person name="Meincke L.J."/>
            <person name="Misra M."/>
            <person name="Moseman B.L."/>
            <person name="Mundt M."/>
            <person name="Munk A.C."/>
            <person name="Okinaka R.T."/>
            <person name="Parson-Quintana B."/>
            <person name="Reilly L.P."/>
            <person name="Richardson P."/>
            <person name="Robinson D.L."/>
            <person name="Rubin E."/>
            <person name="Saunders E."/>
            <person name="Tapia R."/>
            <person name="Tesmer J.G."/>
            <person name="Thayer N."/>
            <person name="Thompson L.S."/>
            <person name="Tice H."/>
            <person name="Ticknor L.O."/>
            <person name="Wills P.L."/>
            <person name="Brettin T.S."/>
            <person name="Gilna P."/>
        </authorList>
    </citation>
    <scope>NUCLEOTIDE SEQUENCE [LARGE SCALE GENOMIC DNA]</scope>
    <source>
        <strain>97-27</strain>
    </source>
</reference>
<protein>
    <recommendedName>
        <fullName evidence="1">Quinolinate synthase</fullName>
        <ecNumber evidence="1">2.5.1.72</ecNumber>
    </recommendedName>
</protein>
<accession>Q6HD97</accession>
<gene>
    <name evidence="1" type="primary">nadA</name>
    <name type="ordered locus">BT9727_4162</name>
</gene>
<name>NADA_BACHK</name>
<keyword id="KW-0004">4Fe-4S</keyword>
<keyword id="KW-0963">Cytoplasm</keyword>
<keyword id="KW-0408">Iron</keyword>
<keyword id="KW-0411">Iron-sulfur</keyword>
<keyword id="KW-0479">Metal-binding</keyword>
<keyword id="KW-0662">Pyridine nucleotide biosynthesis</keyword>
<keyword id="KW-0808">Transferase</keyword>
<dbReference type="EC" id="2.5.1.72" evidence="1"/>
<dbReference type="EMBL" id="AE017355">
    <property type="protein sequence ID" value="AAT60834.1"/>
    <property type="molecule type" value="Genomic_DNA"/>
</dbReference>
<dbReference type="RefSeq" id="WP_000025295.1">
    <property type="nucleotide sequence ID" value="NC_005957.1"/>
</dbReference>
<dbReference type="RefSeq" id="YP_038479.1">
    <property type="nucleotide sequence ID" value="NC_005957.1"/>
</dbReference>
<dbReference type="SMR" id="Q6HD97"/>
<dbReference type="GeneID" id="93006672"/>
<dbReference type="KEGG" id="btk:BT9727_4162"/>
<dbReference type="PATRIC" id="fig|281309.8.peg.4440"/>
<dbReference type="HOGENOM" id="CLU_047382_2_0_9"/>
<dbReference type="UniPathway" id="UPA00253">
    <property type="reaction ID" value="UER00327"/>
</dbReference>
<dbReference type="Proteomes" id="UP000001301">
    <property type="component" value="Chromosome"/>
</dbReference>
<dbReference type="GO" id="GO:0005829">
    <property type="term" value="C:cytosol"/>
    <property type="evidence" value="ECO:0007669"/>
    <property type="project" value="TreeGrafter"/>
</dbReference>
<dbReference type="GO" id="GO:0051539">
    <property type="term" value="F:4 iron, 4 sulfur cluster binding"/>
    <property type="evidence" value="ECO:0007669"/>
    <property type="project" value="UniProtKB-KW"/>
</dbReference>
<dbReference type="GO" id="GO:0046872">
    <property type="term" value="F:metal ion binding"/>
    <property type="evidence" value="ECO:0007669"/>
    <property type="project" value="UniProtKB-KW"/>
</dbReference>
<dbReference type="GO" id="GO:0008987">
    <property type="term" value="F:quinolinate synthetase A activity"/>
    <property type="evidence" value="ECO:0007669"/>
    <property type="project" value="UniProtKB-UniRule"/>
</dbReference>
<dbReference type="GO" id="GO:0034628">
    <property type="term" value="P:'de novo' NAD biosynthetic process from L-aspartate"/>
    <property type="evidence" value="ECO:0007669"/>
    <property type="project" value="TreeGrafter"/>
</dbReference>
<dbReference type="FunFam" id="3.40.50.10800:FF:000001">
    <property type="entry name" value="Quinolinate synthase A"/>
    <property type="match status" value="1"/>
</dbReference>
<dbReference type="Gene3D" id="3.40.50.10800">
    <property type="entry name" value="NadA-like"/>
    <property type="match status" value="3"/>
</dbReference>
<dbReference type="HAMAP" id="MF_00569">
    <property type="entry name" value="NadA_type3"/>
    <property type="match status" value="1"/>
</dbReference>
<dbReference type="InterPro" id="IPR003473">
    <property type="entry name" value="NadA"/>
</dbReference>
<dbReference type="InterPro" id="IPR036094">
    <property type="entry name" value="NadA_sf"/>
</dbReference>
<dbReference type="InterPro" id="IPR023515">
    <property type="entry name" value="Quinolinate_synth_A_type3"/>
</dbReference>
<dbReference type="NCBIfam" id="TIGR00550">
    <property type="entry name" value="nadA"/>
    <property type="match status" value="1"/>
</dbReference>
<dbReference type="NCBIfam" id="NF006880">
    <property type="entry name" value="PRK09375.2-1"/>
    <property type="match status" value="1"/>
</dbReference>
<dbReference type="NCBIfam" id="NF006883">
    <property type="entry name" value="PRK09375.2-4"/>
    <property type="match status" value="1"/>
</dbReference>
<dbReference type="PANTHER" id="PTHR30573:SF0">
    <property type="entry name" value="QUINOLINATE SYNTHASE, CHLOROPLASTIC"/>
    <property type="match status" value="1"/>
</dbReference>
<dbReference type="PANTHER" id="PTHR30573">
    <property type="entry name" value="QUINOLINATE SYNTHETASE A"/>
    <property type="match status" value="1"/>
</dbReference>
<dbReference type="Pfam" id="PF02445">
    <property type="entry name" value="NadA"/>
    <property type="match status" value="1"/>
</dbReference>
<dbReference type="SUPFAM" id="SSF142754">
    <property type="entry name" value="NadA-like"/>
    <property type="match status" value="1"/>
</dbReference>
<proteinExistence type="inferred from homology"/>
<sequence>MSILEKVQPIETMLPERYYTMSTEDMEKRVREIKEKMGETLFIPGHHYQKDEVVQFSDAAGDSLQLAQVAASNKEAKYIVFCGVHFMAETADMLTTDEQVVILPDMRAGCSMADMADIEQTERAWKELTKLFGDTMIPLTYVNSTAAIKAFCGRNGGATVTSSNAKQMVSWAFTQKERLVFLPDQHLGRNTAYDLGIPLDKMAVWDPHTDSLEYDGDIEEIQVILWKGHCSVHQNFTVKNIENVRKNHPDMNIIVHPECCYEVVAASDYAGSTKYIIDMIESAPSGSKWAIGTEMNLVNRIIQQHPDKEIVSLNPFMCPCLTMNRIDLPHLLWALETIERGEEINVISVDKQVTEEAVLALNRMLERV</sequence>
<evidence type="ECO:0000255" key="1">
    <source>
        <dbReference type="HAMAP-Rule" id="MF_00569"/>
    </source>
</evidence>